<comment type="function">
    <text evidence="1">Catalyzes the acyloin condensation reaction between C atoms 2 and 3 of pyruvate and glyceraldehyde 3-phosphate to yield 1-deoxy-D-xylulose-5-phosphate (DXP).</text>
</comment>
<comment type="catalytic activity">
    <reaction evidence="1">
        <text>D-glyceraldehyde 3-phosphate + pyruvate + H(+) = 1-deoxy-D-xylulose 5-phosphate + CO2</text>
        <dbReference type="Rhea" id="RHEA:12605"/>
        <dbReference type="ChEBI" id="CHEBI:15361"/>
        <dbReference type="ChEBI" id="CHEBI:15378"/>
        <dbReference type="ChEBI" id="CHEBI:16526"/>
        <dbReference type="ChEBI" id="CHEBI:57792"/>
        <dbReference type="ChEBI" id="CHEBI:59776"/>
        <dbReference type="EC" id="2.2.1.7"/>
    </reaction>
</comment>
<comment type="cofactor">
    <cofactor evidence="1">
        <name>Mg(2+)</name>
        <dbReference type="ChEBI" id="CHEBI:18420"/>
    </cofactor>
    <text evidence="1">Binds 1 Mg(2+) ion per subunit.</text>
</comment>
<comment type="cofactor">
    <cofactor evidence="1">
        <name>thiamine diphosphate</name>
        <dbReference type="ChEBI" id="CHEBI:58937"/>
    </cofactor>
    <text evidence="1">Binds 1 thiamine pyrophosphate per subunit.</text>
</comment>
<comment type="pathway">
    <text evidence="1">Metabolic intermediate biosynthesis; 1-deoxy-D-xylulose 5-phosphate biosynthesis; 1-deoxy-D-xylulose 5-phosphate from D-glyceraldehyde 3-phosphate and pyruvate: step 1/1.</text>
</comment>
<comment type="subunit">
    <text evidence="1">Homodimer.</text>
</comment>
<comment type="similarity">
    <text evidence="1">Belongs to the transketolase family. DXPS subfamily.</text>
</comment>
<reference key="1">
    <citation type="journal article" date="2009" name="J. Bacteriol.">
        <title>Genomic sequencing reveals regulatory mutations and recombinational events in the widely used MC4100 lineage of Escherichia coli K-12.</title>
        <authorList>
            <person name="Ferenci T."/>
            <person name="Zhou Z."/>
            <person name="Betteridge T."/>
            <person name="Ren Y."/>
            <person name="Liu Y."/>
            <person name="Feng L."/>
            <person name="Reeves P.R."/>
            <person name="Wang L."/>
        </authorList>
    </citation>
    <scope>NUCLEOTIDE SEQUENCE [LARGE SCALE GENOMIC DNA]</scope>
    <source>
        <strain>K12 / MC4100 / BW2952</strain>
    </source>
</reference>
<organism>
    <name type="scientific">Escherichia coli (strain K12 / MC4100 / BW2952)</name>
    <dbReference type="NCBI Taxonomy" id="595496"/>
    <lineage>
        <taxon>Bacteria</taxon>
        <taxon>Pseudomonadati</taxon>
        <taxon>Pseudomonadota</taxon>
        <taxon>Gammaproteobacteria</taxon>
        <taxon>Enterobacterales</taxon>
        <taxon>Enterobacteriaceae</taxon>
        <taxon>Escherichia</taxon>
    </lineage>
</organism>
<evidence type="ECO:0000255" key="1">
    <source>
        <dbReference type="HAMAP-Rule" id="MF_00315"/>
    </source>
</evidence>
<feature type="chain" id="PRO_1000205067" description="1-deoxy-D-xylulose-5-phosphate synthase">
    <location>
        <begin position="1"/>
        <end position="620"/>
    </location>
</feature>
<feature type="binding site" evidence="1">
    <location>
        <position position="80"/>
    </location>
    <ligand>
        <name>thiamine diphosphate</name>
        <dbReference type="ChEBI" id="CHEBI:58937"/>
    </ligand>
</feature>
<feature type="binding site" evidence="1">
    <location>
        <begin position="121"/>
        <end position="123"/>
    </location>
    <ligand>
        <name>thiamine diphosphate</name>
        <dbReference type="ChEBI" id="CHEBI:58937"/>
    </ligand>
</feature>
<feature type="binding site" evidence="1">
    <location>
        <position position="152"/>
    </location>
    <ligand>
        <name>Mg(2+)</name>
        <dbReference type="ChEBI" id="CHEBI:18420"/>
    </ligand>
</feature>
<feature type="binding site" evidence="1">
    <location>
        <begin position="153"/>
        <end position="154"/>
    </location>
    <ligand>
        <name>thiamine diphosphate</name>
        <dbReference type="ChEBI" id="CHEBI:58937"/>
    </ligand>
</feature>
<feature type="binding site" evidence="1">
    <location>
        <position position="181"/>
    </location>
    <ligand>
        <name>Mg(2+)</name>
        <dbReference type="ChEBI" id="CHEBI:18420"/>
    </ligand>
</feature>
<feature type="binding site" evidence="1">
    <location>
        <position position="181"/>
    </location>
    <ligand>
        <name>thiamine diphosphate</name>
        <dbReference type="ChEBI" id="CHEBI:58937"/>
    </ligand>
</feature>
<feature type="binding site" evidence="1">
    <location>
        <position position="288"/>
    </location>
    <ligand>
        <name>thiamine diphosphate</name>
        <dbReference type="ChEBI" id="CHEBI:58937"/>
    </ligand>
</feature>
<feature type="binding site" evidence="1">
    <location>
        <position position="370"/>
    </location>
    <ligand>
        <name>thiamine diphosphate</name>
        <dbReference type="ChEBI" id="CHEBI:58937"/>
    </ligand>
</feature>
<accession>C4ZTH7</accession>
<dbReference type="EC" id="2.2.1.7" evidence="1"/>
<dbReference type="EMBL" id="CP001396">
    <property type="protein sequence ID" value="ACR61737.1"/>
    <property type="molecule type" value="Genomic_DNA"/>
</dbReference>
<dbReference type="RefSeq" id="WP_000006797.1">
    <property type="nucleotide sequence ID" value="NC_012759.1"/>
</dbReference>
<dbReference type="SMR" id="C4ZTH7"/>
<dbReference type="KEGG" id="ebw:BWG_0302"/>
<dbReference type="HOGENOM" id="CLU_009227_1_4_6"/>
<dbReference type="UniPathway" id="UPA00064">
    <property type="reaction ID" value="UER00091"/>
</dbReference>
<dbReference type="GO" id="GO:0005829">
    <property type="term" value="C:cytosol"/>
    <property type="evidence" value="ECO:0007669"/>
    <property type="project" value="TreeGrafter"/>
</dbReference>
<dbReference type="GO" id="GO:0008661">
    <property type="term" value="F:1-deoxy-D-xylulose-5-phosphate synthase activity"/>
    <property type="evidence" value="ECO:0007669"/>
    <property type="project" value="UniProtKB-UniRule"/>
</dbReference>
<dbReference type="GO" id="GO:0000287">
    <property type="term" value="F:magnesium ion binding"/>
    <property type="evidence" value="ECO:0007669"/>
    <property type="project" value="UniProtKB-UniRule"/>
</dbReference>
<dbReference type="GO" id="GO:0030976">
    <property type="term" value="F:thiamine pyrophosphate binding"/>
    <property type="evidence" value="ECO:0007669"/>
    <property type="project" value="UniProtKB-UniRule"/>
</dbReference>
<dbReference type="GO" id="GO:0052865">
    <property type="term" value="P:1-deoxy-D-xylulose 5-phosphate biosynthetic process"/>
    <property type="evidence" value="ECO:0007669"/>
    <property type="project" value="UniProtKB-UniPathway"/>
</dbReference>
<dbReference type="GO" id="GO:0019288">
    <property type="term" value="P:isopentenyl diphosphate biosynthetic process, methylerythritol 4-phosphate pathway"/>
    <property type="evidence" value="ECO:0007669"/>
    <property type="project" value="TreeGrafter"/>
</dbReference>
<dbReference type="GO" id="GO:0016114">
    <property type="term" value="P:terpenoid biosynthetic process"/>
    <property type="evidence" value="ECO:0007669"/>
    <property type="project" value="UniProtKB-UniRule"/>
</dbReference>
<dbReference type="GO" id="GO:0009228">
    <property type="term" value="P:thiamine biosynthetic process"/>
    <property type="evidence" value="ECO:0007669"/>
    <property type="project" value="UniProtKB-UniRule"/>
</dbReference>
<dbReference type="CDD" id="cd02007">
    <property type="entry name" value="TPP_DXS"/>
    <property type="match status" value="1"/>
</dbReference>
<dbReference type="CDD" id="cd07033">
    <property type="entry name" value="TPP_PYR_DXS_TK_like"/>
    <property type="match status" value="1"/>
</dbReference>
<dbReference type="FunFam" id="3.40.50.920:FF:000002">
    <property type="entry name" value="1-deoxy-D-xylulose-5-phosphate synthase"/>
    <property type="match status" value="1"/>
</dbReference>
<dbReference type="FunFam" id="3.40.50.970:FF:000005">
    <property type="entry name" value="1-deoxy-D-xylulose-5-phosphate synthase"/>
    <property type="match status" value="1"/>
</dbReference>
<dbReference type="Gene3D" id="3.40.50.920">
    <property type="match status" value="1"/>
</dbReference>
<dbReference type="Gene3D" id="3.40.50.970">
    <property type="match status" value="2"/>
</dbReference>
<dbReference type="HAMAP" id="MF_00315">
    <property type="entry name" value="DXP_synth"/>
    <property type="match status" value="1"/>
</dbReference>
<dbReference type="InterPro" id="IPR005477">
    <property type="entry name" value="Dxylulose-5-P_synthase"/>
</dbReference>
<dbReference type="InterPro" id="IPR029061">
    <property type="entry name" value="THDP-binding"/>
</dbReference>
<dbReference type="InterPro" id="IPR009014">
    <property type="entry name" value="Transketo_C/PFOR_II"/>
</dbReference>
<dbReference type="InterPro" id="IPR005475">
    <property type="entry name" value="Transketolase-like_Pyr-bd"/>
</dbReference>
<dbReference type="InterPro" id="IPR020826">
    <property type="entry name" value="Transketolase_BS"/>
</dbReference>
<dbReference type="InterPro" id="IPR033248">
    <property type="entry name" value="Transketolase_C"/>
</dbReference>
<dbReference type="InterPro" id="IPR049557">
    <property type="entry name" value="Transketolase_CS"/>
</dbReference>
<dbReference type="NCBIfam" id="TIGR00204">
    <property type="entry name" value="dxs"/>
    <property type="match status" value="1"/>
</dbReference>
<dbReference type="NCBIfam" id="NF003933">
    <property type="entry name" value="PRK05444.2-2"/>
    <property type="match status" value="1"/>
</dbReference>
<dbReference type="PANTHER" id="PTHR43322">
    <property type="entry name" value="1-D-DEOXYXYLULOSE 5-PHOSPHATE SYNTHASE-RELATED"/>
    <property type="match status" value="1"/>
</dbReference>
<dbReference type="PANTHER" id="PTHR43322:SF5">
    <property type="entry name" value="1-DEOXY-D-XYLULOSE-5-PHOSPHATE SYNTHASE, CHLOROPLASTIC"/>
    <property type="match status" value="1"/>
</dbReference>
<dbReference type="Pfam" id="PF13292">
    <property type="entry name" value="DXP_synthase_N"/>
    <property type="match status" value="1"/>
</dbReference>
<dbReference type="Pfam" id="PF02779">
    <property type="entry name" value="Transket_pyr"/>
    <property type="match status" value="1"/>
</dbReference>
<dbReference type="Pfam" id="PF02780">
    <property type="entry name" value="Transketolase_C"/>
    <property type="match status" value="1"/>
</dbReference>
<dbReference type="SMART" id="SM00861">
    <property type="entry name" value="Transket_pyr"/>
    <property type="match status" value="1"/>
</dbReference>
<dbReference type="SUPFAM" id="SSF52518">
    <property type="entry name" value="Thiamin diphosphate-binding fold (THDP-binding)"/>
    <property type="match status" value="2"/>
</dbReference>
<dbReference type="SUPFAM" id="SSF52922">
    <property type="entry name" value="TK C-terminal domain-like"/>
    <property type="match status" value="1"/>
</dbReference>
<dbReference type="PROSITE" id="PS00801">
    <property type="entry name" value="TRANSKETOLASE_1"/>
    <property type="match status" value="1"/>
</dbReference>
<dbReference type="PROSITE" id="PS00802">
    <property type="entry name" value="TRANSKETOLASE_2"/>
    <property type="match status" value="1"/>
</dbReference>
<proteinExistence type="inferred from homology"/>
<gene>
    <name evidence="1" type="primary">dxs</name>
    <name type="ordered locus">BWG_0302</name>
</gene>
<name>DXS_ECOBW</name>
<protein>
    <recommendedName>
        <fullName evidence="1">1-deoxy-D-xylulose-5-phosphate synthase</fullName>
        <ecNumber evidence="1">2.2.1.7</ecNumber>
    </recommendedName>
    <alternativeName>
        <fullName evidence="1">1-deoxyxylulose-5-phosphate synthase</fullName>
        <shortName evidence="1">DXP synthase</shortName>
        <shortName evidence="1">DXPS</shortName>
    </alternativeName>
</protein>
<sequence>MSFDIAKYPTLALVDSTQELRLLPKESLPKLCDELRRYLLDSVSRSSGHFASGLGTVELTVALHYVYNTPFDQLIWDVGHQAYPHKILTGRRDKIGTIRQKGGLHPFPWRGESEYDVLSVGHSSTSISAGIGIAVAAEKEGKNRRTVCVIGDGAITAGMAFEAMNHAGDIRPDMLVILNDNEMSISENVGALNNHLAQLLSGKLYSSLREGGKKVFSGVPPIKELLKRTEEHIKGMVVPGTLFEELGFNYIGPVDGHDVLGLITTLKNMRDLKGPQFLHIMTKKGRGYEPAEKDPITFHAVPKFDPSSGCLPKSSGGLPSYSKIFGDWLCETAAKDNKLMAITPAMREGSGMVEFSRKFPDRYFDVAIAEQHAVTFAAGLAIGGYKPIVAIYSTFLQRAYDQVLHDVAIQKLPVLFAIDRAGIVGADGQTHQGAFDLSYLRCIPEMVIMTPSDENECRQMLYTGYHYNDGPSAVRYPRGNAVGVELTPLEKLPIGKGIVKRRGEKLAILNFGTLMPEAAKVAESLNATLVDMRFVKPLDEALILEMAASHEALVTVEENAIMGGAGSGVNEVLMAHRKPVPVLNIGLPDFFIPQGTQEEMRAELGLDAAGMEAKIKAWLA</sequence>
<keyword id="KW-0414">Isoprene biosynthesis</keyword>
<keyword id="KW-0460">Magnesium</keyword>
<keyword id="KW-0479">Metal-binding</keyword>
<keyword id="KW-0784">Thiamine biosynthesis</keyword>
<keyword id="KW-0786">Thiamine pyrophosphate</keyword>
<keyword id="KW-0808">Transferase</keyword>